<organism>
    <name type="scientific">Mycobacterium sp. (strain JLS)</name>
    <dbReference type="NCBI Taxonomy" id="164757"/>
    <lineage>
        <taxon>Bacteria</taxon>
        <taxon>Bacillati</taxon>
        <taxon>Actinomycetota</taxon>
        <taxon>Actinomycetes</taxon>
        <taxon>Mycobacteriales</taxon>
        <taxon>Mycobacteriaceae</taxon>
        <taxon>Mycobacterium</taxon>
    </lineage>
</organism>
<protein>
    <recommendedName>
        <fullName evidence="1">Ribonuclease HII</fullName>
        <shortName evidence="1">RNase HII</shortName>
        <ecNumber evidence="1">3.1.26.4</ecNumber>
    </recommendedName>
</protein>
<sequence length="239" mass="25218">MPASWPPRTVIRKASGLRTLESALYRNGLGPVAGVDEVGRGACAGPLVVAACVLGPNRLESLAALDDSKKLGEKERERLFPVIRRYALAYHVVFIPSGEVDRRGVHVANIEGMRRAVAGLSVRPGYVLSDGFRVPGLPMPSLPVVGGDAAAACIAAASVLAKVSRDRLMVAMEREHPGYGFAEHKGYSTPAHTAALAELGPCAQHRYSFINVRRLVTAGTPQISGGLTDAEPGQCCELG</sequence>
<reference key="1">
    <citation type="submission" date="2007-02" db="EMBL/GenBank/DDBJ databases">
        <title>Complete sequence of Mycobacterium sp. JLS.</title>
        <authorList>
            <consortium name="US DOE Joint Genome Institute"/>
            <person name="Copeland A."/>
            <person name="Lucas S."/>
            <person name="Lapidus A."/>
            <person name="Barry K."/>
            <person name="Detter J.C."/>
            <person name="Glavina del Rio T."/>
            <person name="Hammon N."/>
            <person name="Israni S."/>
            <person name="Dalin E."/>
            <person name="Tice H."/>
            <person name="Pitluck S."/>
            <person name="Chain P."/>
            <person name="Malfatti S."/>
            <person name="Shin M."/>
            <person name="Vergez L."/>
            <person name="Schmutz J."/>
            <person name="Larimer F."/>
            <person name="Land M."/>
            <person name="Hauser L."/>
            <person name="Kyrpides N."/>
            <person name="Mikhailova N."/>
            <person name="Miller C.D."/>
            <person name="Anderson A.J."/>
            <person name="Sims R.C."/>
            <person name="Richardson P."/>
        </authorList>
    </citation>
    <scope>NUCLEOTIDE SEQUENCE [LARGE SCALE GENOMIC DNA]</scope>
    <source>
        <strain>JLS</strain>
    </source>
</reference>
<evidence type="ECO:0000255" key="1">
    <source>
        <dbReference type="HAMAP-Rule" id="MF_00052"/>
    </source>
</evidence>
<evidence type="ECO:0000255" key="2">
    <source>
        <dbReference type="PROSITE-ProRule" id="PRU01319"/>
    </source>
</evidence>
<dbReference type="EC" id="3.1.26.4" evidence="1"/>
<dbReference type="EMBL" id="CP000580">
    <property type="protein sequence ID" value="ABN97740.1"/>
    <property type="molecule type" value="Genomic_DNA"/>
</dbReference>
<dbReference type="SMR" id="A3PXW3"/>
<dbReference type="KEGG" id="mjl:Mjls_1952"/>
<dbReference type="HOGENOM" id="CLU_036532_1_0_11"/>
<dbReference type="BioCyc" id="MSP164757:G1G8C-1972-MONOMER"/>
<dbReference type="GO" id="GO:0005737">
    <property type="term" value="C:cytoplasm"/>
    <property type="evidence" value="ECO:0007669"/>
    <property type="project" value="UniProtKB-SubCell"/>
</dbReference>
<dbReference type="GO" id="GO:0032299">
    <property type="term" value="C:ribonuclease H2 complex"/>
    <property type="evidence" value="ECO:0007669"/>
    <property type="project" value="TreeGrafter"/>
</dbReference>
<dbReference type="GO" id="GO:0030145">
    <property type="term" value="F:manganese ion binding"/>
    <property type="evidence" value="ECO:0007669"/>
    <property type="project" value="UniProtKB-UniRule"/>
</dbReference>
<dbReference type="GO" id="GO:0003723">
    <property type="term" value="F:RNA binding"/>
    <property type="evidence" value="ECO:0007669"/>
    <property type="project" value="InterPro"/>
</dbReference>
<dbReference type="GO" id="GO:0004523">
    <property type="term" value="F:RNA-DNA hybrid ribonuclease activity"/>
    <property type="evidence" value="ECO:0007669"/>
    <property type="project" value="UniProtKB-UniRule"/>
</dbReference>
<dbReference type="GO" id="GO:0043137">
    <property type="term" value="P:DNA replication, removal of RNA primer"/>
    <property type="evidence" value="ECO:0007669"/>
    <property type="project" value="TreeGrafter"/>
</dbReference>
<dbReference type="GO" id="GO:0006298">
    <property type="term" value="P:mismatch repair"/>
    <property type="evidence" value="ECO:0007669"/>
    <property type="project" value="TreeGrafter"/>
</dbReference>
<dbReference type="CDD" id="cd07182">
    <property type="entry name" value="RNase_HII_bacteria_HII_like"/>
    <property type="match status" value="1"/>
</dbReference>
<dbReference type="FunFam" id="3.30.420.10:FF:000113">
    <property type="entry name" value="Ribonuclease HII"/>
    <property type="match status" value="1"/>
</dbReference>
<dbReference type="Gene3D" id="3.30.420.10">
    <property type="entry name" value="Ribonuclease H-like superfamily/Ribonuclease H"/>
    <property type="match status" value="1"/>
</dbReference>
<dbReference type="HAMAP" id="MF_00052_B">
    <property type="entry name" value="RNase_HII_B"/>
    <property type="match status" value="1"/>
</dbReference>
<dbReference type="InterPro" id="IPR022898">
    <property type="entry name" value="RNase_HII"/>
</dbReference>
<dbReference type="InterPro" id="IPR001352">
    <property type="entry name" value="RNase_HII/HIII"/>
</dbReference>
<dbReference type="InterPro" id="IPR024567">
    <property type="entry name" value="RNase_HII/HIII_dom"/>
</dbReference>
<dbReference type="InterPro" id="IPR012337">
    <property type="entry name" value="RNaseH-like_sf"/>
</dbReference>
<dbReference type="InterPro" id="IPR036397">
    <property type="entry name" value="RNaseH_sf"/>
</dbReference>
<dbReference type="NCBIfam" id="NF000595">
    <property type="entry name" value="PRK00015.1-3"/>
    <property type="match status" value="1"/>
</dbReference>
<dbReference type="NCBIfam" id="NF000598">
    <property type="entry name" value="PRK00015.2-2"/>
    <property type="match status" value="1"/>
</dbReference>
<dbReference type="NCBIfam" id="NF000600">
    <property type="entry name" value="PRK00015.2-4"/>
    <property type="match status" value="1"/>
</dbReference>
<dbReference type="PANTHER" id="PTHR10954">
    <property type="entry name" value="RIBONUCLEASE H2 SUBUNIT A"/>
    <property type="match status" value="1"/>
</dbReference>
<dbReference type="PANTHER" id="PTHR10954:SF18">
    <property type="entry name" value="RIBONUCLEASE HII"/>
    <property type="match status" value="1"/>
</dbReference>
<dbReference type="Pfam" id="PF01351">
    <property type="entry name" value="RNase_HII"/>
    <property type="match status" value="1"/>
</dbReference>
<dbReference type="SUPFAM" id="SSF53098">
    <property type="entry name" value="Ribonuclease H-like"/>
    <property type="match status" value="1"/>
</dbReference>
<dbReference type="PROSITE" id="PS51975">
    <property type="entry name" value="RNASE_H_2"/>
    <property type="match status" value="1"/>
</dbReference>
<comment type="function">
    <text evidence="1">Endonuclease that specifically degrades the RNA of RNA-DNA hybrids.</text>
</comment>
<comment type="catalytic activity">
    <reaction evidence="1">
        <text>Endonucleolytic cleavage to 5'-phosphomonoester.</text>
        <dbReference type="EC" id="3.1.26.4"/>
    </reaction>
</comment>
<comment type="cofactor">
    <cofactor evidence="1">
        <name>Mn(2+)</name>
        <dbReference type="ChEBI" id="CHEBI:29035"/>
    </cofactor>
    <cofactor evidence="1">
        <name>Mg(2+)</name>
        <dbReference type="ChEBI" id="CHEBI:18420"/>
    </cofactor>
    <text evidence="1">Manganese or magnesium. Binds 1 divalent metal ion per monomer in the absence of substrate. May bind a second metal ion after substrate binding.</text>
</comment>
<comment type="subcellular location">
    <subcellularLocation>
        <location evidence="1">Cytoplasm</location>
    </subcellularLocation>
</comment>
<comment type="similarity">
    <text evidence="1">Belongs to the RNase HII family.</text>
</comment>
<name>RNH2_MYCSJ</name>
<proteinExistence type="inferred from homology"/>
<keyword id="KW-0963">Cytoplasm</keyword>
<keyword id="KW-0255">Endonuclease</keyword>
<keyword id="KW-0378">Hydrolase</keyword>
<keyword id="KW-0464">Manganese</keyword>
<keyword id="KW-0479">Metal-binding</keyword>
<keyword id="KW-0540">Nuclease</keyword>
<feature type="chain" id="PRO_1000031165" description="Ribonuclease HII">
    <location>
        <begin position="1"/>
        <end position="239"/>
    </location>
</feature>
<feature type="domain" description="RNase H type-2" evidence="2">
    <location>
        <begin position="30"/>
        <end position="221"/>
    </location>
</feature>
<feature type="binding site" evidence="1">
    <location>
        <position position="36"/>
    </location>
    <ligand>
        <name>a divalent metal cation</name>
        <dbReference type="ChEBI" id="CHEBI:60240"/>
    </ligand>
</feature>
<feature type="binding site" evidence="1">
    <location>
        <position position="37"/>
    </location>
    <ligand>
        <name>a divalent metal cation</name>
        <dbReference type="ChEBI" id="CHEBI:60240"/>
    </ligand>
</feature>
<feature type="binding site" evidence="1">
    <location>
        <position position="130"/>
    </location>
    <ligand>
        <name>a divalent metal cation</name>
        <dbReference type="ChEBI" id="CHEBI:60240"/>
    </ligand>
</feature>
<gene>
    <name evidence="1" type="primary">rnhB</name>
    <name type="ordered locus">Mjls_1952</name>
</gene>
<accession>A3PXW3</accession>